<organism>
    <name type="scientific">Klebsiella pneumoniae (strain 342)</name>
    <dbReference type="NCBI Taxonomy" id="507522"/>
    <lineage>
        <taxon>Bacteria</taxon>
        <taxon>Pseudomonadati</taxon>
        <taxon>Pseudomonadota</taxon>
        <taxon>Gammaproteobacteria</taxon>
        <taxon>Enterobacterales</taxon>
        <taxon>Enterobacteriaceae</taxon>
        <taxon>Klebsiella/Raoultella group</taxon>
        <taxon>Klebsiella</taxon>
        <taxon>Klebsiella pneumoniae complex</taxon>
    </lineage>
</organism>
<keyword id="KW-0067">ATP-binding</keyword>
<keyword id="KW-0963">Cytoplasm</keyword>
<keyword id="KW-0347">Helicase</keyword>
<keyword id="KW-0378">Hydrolase</keyword>
<keyword id="KW-0547">Nucleotide-binding</keyword>
<keyword id="KW-0694">RNA-binding</keyword>
<protein>
    <recommendedName>
        <fullName evidence="1">ATP-dependent RNA helicase RhlB</fullName>
        <ecNumber evidence="1">3.6.4.13</ecNumber>
    </recommendedName>
</protein>
<name>RHLB_KLEP3</name>
<evidence type="ECO:0000255" key="1">
    <source>
        <dbReference type="HAMAP-Rule" id="MF_00661"/>
    </source>
</evidence>
<evidence type="ECO:0000256" key="2">
    <source>
        <dbReference type="SAM" id="MobiDB-lite"/>
    </source>
</evidence>
<reference key="1">
    <citation type="journal article" date="2008" name="PLoS Genet.">
        <title>Complete genome sequence of the N2-fixing broad host range endophyte Klebsiella pneumoniae 342 and virulence predictions verified in mice.</title>
        <authorList>
            <person name="Fouts D.E."/>
            <person name="Tyler H.L."/>
            <person name="DeBoy R.T."/>
            <person name="Daugherty S."/>
            <person name="Ren Q."/>
            <person name="Badger J.H."/>
            <person name="Durkin A.S."/>
            <person name="Huot H."/>
            <person name="Shrivastava S."/>
            <person name="Kothari S."/>
            <person name="Dodson R.J."/>
            <person name="Mohamoud Y."/>
            <person name="Khouri H."/>
            <person name="Roesch L.F.W."/>
            <person name="Krogfelt K.A."/>
            <person name="Struve C."/>
            <person name="Triplett E.W."/>
            <person name="Methe B.A."/>
        </authorList>
    </citation>
    <scope>NUCLEOTIDE SEQUENCE [LARGE SCALE GENOMIC DNA]</scope>
    <source>
        <strain>342</strain>
    </source>
</reference>
<feature type="chain" id="PRO_1000131296" description="ATP-dependent RNA helicase RhlB">
    <location>
        <begin position="1"/>
        <end position="421"/>
    </location>
</feature>
<feature type="domain" description="Helicase ATP-binding" evidence="1">
    <location>
        <begin position="40"/>
        <end position="219"/>
    </location>
</feature>
<feature type="domain" description="Helicase C-terminal" evidence="1">
    <location>
        <begin position="245"/>
        <end position="390"/>
    </location>
</feature>
<feature type="region of interest" description="Disordered" evidence="2">
    <location>
        <begin position="396"/>
        <end position="421"/>
    </location>
</feature>
<feature type="short sequence motif" description="Q motif">
    <location>
        <begin position="9"/>
        <end position="37"/>
    </location>
</feature>
<feature type="short sequence motif" description="DEAD box">
    <location>
        <begin position="165"/>
        <end position="168"/>
    </location>
</feature>
<feature type="compositionally biased region" description="Low complexity" evidence="2">
    <location>
        <begin position="403"/>
        <end position="414"/>
    </location>
</feature>
<feature type="binding site" evidence="1">
    <location>
        <begin position="53"/>
        <end position="60"/>
    </location>
    <ligand>
        <name>ATP</name>
        <dbReference type="ChEBI" id="CHEBI:30616"/>
    </ligand>
</feature>
<gene>
    <name evidence="1" type="primary">rhlB</name>
    <name type="ordered locus">KPK_5398</name>
</gene>
<proteinExistence type="inferred from homology"/>
<sequence>MSKTHLTEQKFSDFALHPAVIEALEKKGFHNCTPIQALALPLTLEGRDVAGQAQTGTGKTMAFLTSTFHYLLSHPAIADRQVNQPRALIMAPTRELAVQIHADAEPLAQATGLKLGLAYGGDGYDKQLKVLESGVDILIGTTGRLIDYAKQNHINLGAIQVVVLDEADRMYDLGFIKDIRWLFRRMPPATQRLNMLFSATLSYRVRELAFEQMNNAEYVEVEPEQKTGHRIKEELFYPSNEEKMRLLQTLLEEEWPDRAIIFANTKHRCEDIWGHLAADGHRVGLLTGDVAQKKRLRILDEFTRGDLDILVATDVAARGLHIPAVTHVFNYDLPDDCEDYVHRIGRTGRAGASGNSISLACEEYALNLPAIETYIGHSIPVSKYNPDALMTDLPKPLRLTRARPGNGPRRNGPPRNRRRSG</sequence>
<accession>B5XYY9</accession>
<comment type="function">
    <text evidence="1">DEAD-box RNA helicase involved in RNA degradation. Has RNA-dependent ATPase activity and unwinds double-stranded RNA.</text>
</comment>
<comment type="catalytic activity">
    <reaction evidence="1">
        <text>ATP + H2O = ADP + phosphate + H(+)</text>
        <dbReference type="Rhea" id="RHEA:13065"/>
        <dbReference type="ChEBI" id="CHEBI:15377"/>
        <dbReference type="ChEBI" id="CHEBI:15378"/>
        <dbReference type="ChEBI" id="CHEBI:30616"/>
        <dbReference type="ChEBI" id="CHEBI:43474"/>
        <dbReference type="ChEBI" id="CHEBI:456216"/>
        <dbReference type="EC" id="3.6.4.13"/>
    </reaction>
</comment>
<comment type="subunit">
    <text evidence="1">Component of the RNA degradosome, which is a multiprotein complex involved in RNA processing and mRNA degradation.</text>
</comment>
<comment type="subcellular location">
    <subcellularLocation>
        <location evidence="1">Cytoplasm</location>
    </subcellularLocation>
</comment>
<comment type="similarity">
    <text evidence="1">Belongs to the DEAD box helicase family. RhlB subfamily.</text>
</comment>
<dbReference type="EC" id="3.6.4.13" evidence="1"/>
<dbReference type="EMBL" id="CP000964">
    <property type="protein sequence ID" value="ACI09038.1"/>
    <property type="molecule type" value="Genomic_DNA"/>
</dbReference>
<dbReference type="SMR" id="B5XYY9"/>
<dbReference type="KEGG" id="kpe:KPK_5398"/>
<dbReference type="HOGENOM" id="CLU_003041_1_3_6"/>
<dbReference type="Proteomes" id="UP000001734">
    <property type="component" value="Chromosome"/>
</dbReference>
<dbReference type="GO" id="GO:0005829">
    <property type="term" value="C:cytosol"/>
    <property type="evidence" value="ECO:0007669"/>
    <property type="project" value="TreeGrafter"/>
</dbReference>
<dbReference type="GO" id="GO:0005524">
    <property type="term" value="F:ATP binding"/>
    <property type="evidence" value="ECO:0007669"/>
    <property type="project" value="UniProtKB-UniRule"/>
</dbReference>
<dbReference type="GO" id="GO:0016887">
    <property type="term" value="F:ATP hydrolysis activity"/>
    <property type="evidence" value="ECO:0007669"/>
    <property type="project" value="RHEA"/>
</dbReference>
<dbReference type="GO" id="GO:0003723">
    <property type="term" value="F:RNA binding"/>
    <property type="evidence" value="ECO:0007669"/>
    <property type="project" value="UniProtKB-UniRule"/>
</dbReference>
<dbReference type="GO" id="GO:0003724">
    <property type="term" value="F:RNA helicase activity"/>
    <property type="evidence" value="ECO:0007669"/>
    <property type="project" value="UniProtKB-UniRule"/>
</dbReference>
<dbReference type="GO" id="GO:0006401">
    <property type="term" value="P:RNA catabolic process"/>
    <property type="evidence" value="ECO:0007669"/>
    <property type="project" value="UniProtKB-UniRule"/>
</dbReference>
<dbReference type="CDD" id="cd00268">
    <property type="entry name" value="DEADc"/>
    <property type="match status" value="1"/>
</dbReference>
<dbReference type="CDD" id="cd18787">
    <property type="entry name" value="SF2_C_DEAD"/>
    <property type="match status" value="1"/>
</dbReference>
<dbReference type="FunFam" id="3.40.50.300:FF:000008">
    <property type="entry name" value="ATP-dependent RNA helicase RhlB"/>
    <property type="match status" value="1"/>
</dbReference>
<dbReference type="FunFam" id="3.40.50.300:FF:000312">
    <property type="entry name" value="ATP-dependent RNA helicase RhlB"/>
    <property type="match status" value="1"/>
</dbReference>
<dbReference type="Gene3D" id="3.40.50.300">
    <property type="entry name" value="P-loop containing nucleotide triphosphate hydrolases"/>
    <property type="match status" value="2"/>
</dbReference>
<dbReference type="HAMAP" id="MF_00661">
    <property type="entry name" value="DEAD_helicase_RhlB"/>
    <property type="match status" value="1"/>
</dbReference>
<dbReference type="InterPro" id="IPR011545">
    <property type="entry name" value="DEAD/DEAH_box_helicase_dom"/>
</dbReference>
<dbReference type="InterPro" id="IPR050079">
    <property type="entry name" value="DEAD_box_RNA_helicase"/>
</dbReference>
<dbReference type="InterPro" id="IPR014001">
    <property type="entry name" value="Helicase_ATP-bd"/>
</dbReference>
<dbReference type="InterPro" id="IPR001650">
    <property type="entry name" value="Helicase_C-like"/>
</dbReference>
<dbReference type="InterPro" id="IPR027417">
    <property type="entry name" value="P-loop_NTPase"/>
</dbReference>
<dbReference type="InterPro" id="IPR000629">
    <property type="entry name" value="RNA-helicase_DEAD-box_CS"/>
</dbReference>
<dbReference type="InterPro" id="IPR023554">
    <property type="entry name" value="RNA_helicase_ATP-dep_RhlB"/>
</dbReference>
<dbReference type="InterPro" id="IPR014014">
    <property type="entry name" value="RNA_helicase_DEAD_Q_motif"/>
</dbReference>
<dbReference type="NCBIfam" id="NF003419">
    <property type="entry name" value="PRK04837.1"/>
    <property type="match status" value="1"/>
</dbReference>
<dbReference type="PANTHER" id="PTHR47959:SF10">
    <property type="entry name" value="ATP-DEPENDENT RNA HELICASE RHLB"/>
    <property type="match status" value="1"/>
</dbReference>
<dbReference type="PANTHER" id="PTHR47959">
    <property type="entry name" value="ATP-DEPENDENT RNA HELICASE RHLE-RELATED"/>
    <property type="match status" value="1"/>
</dbReference>
<dbReference type="Pfam" id="PF00270">
    <property type="entry name" value="DEAD"/>
    <property type="match status" value="1"/>
</dbReference>
<dbReference type="Pfam" id="PF00271">
    <property type="entry name" value="Helicase_C"/>
    <property type="match status" value="1"/>
</dbReference>
<dbReference type="SMART" id="SM00487">
    <property type="entry name" value="DEXDc"/>
    <property type="match status" value="1"/>
</dbReference>
<dbReference type="SMART" id="SM00490">
    <property type="entry name" value="HELICc"/>
    <property type="match status" value="1"/>
</dbReference>
<dbReference type="SUPFAM" id="SSF52540">
    <property type="entry name" value="P-loop containing nucleoside triphosphate hydrolases"/>
    <property type="match status" value="1"/>
</dbReference>
<dbReference type="PROSITE" id="PS00039">
    <property type="entry name" value="DEAD_ATP_HELICASE"/>
    <property type="match status" value="1"/>
</dbReference>
<dbReference type="PROSITE" id="PS51192">
    <property type="entry name" value="HELICASE_ATP_BIND_1"/>
    <property type="match status" value="1"/>
</dbReference>
<dbReference type="PROSITE" id="PS51194">
    <property type="entry name" value="HELICASE_CTER"/>
    <property type="match status" value="1"/>
</dbReference>
<dbReference type="PROSITE" id="PS51195">
    <property type="entry name" value="Q_MOTIF"/>
    <property type="match status" value="1"/>
</dbReference>